<dbReference type="EMBL" id="CP000016">
    <property type="protein sequence ID" value="AAZ41071.1"/>
    <property type="molecule type" value="Genomic_DNA"/>
</dbReference>
<dbReference type="RefSeq" id="WP_011282981.1">
    <property type="nucleotide sequence ID" value="NC_007292.1"/>
</dbReference>
<dbReference type="SMR" id="Q492M6"/>
<dbReference type="STRING" id="291272.BPEN_452"/>
<dbReference type="KEGG" id="bpn:BPEN_452"/>
<dbReference type="eggNOG" id="COG1495">
    <property type="taxonomic scope" value="Bacteria"/>
</dbReference>
<dbReference type="HOGENOM" id="CLU_098660_2_0_6"/>
<dbReference type="OrthoDB" id="3711263at2"/>
<dbReference type="Proteomes" id="UP000007794">
    <property type="component" value="Chromosome"/>
</dbReference>
<dbReference type="GO" id="GO:0005886">
    <property type="term" value="C:plasma membrane"/>
    <property type="evidence" value="ECO:0007669"/>
    <property type="project" value="UniProtKB-SubCell"/>
</dbReference>
<dbReference type="GO" id="GO:0009055">
    <property type="term" value="F:electron transfer activity"/>
    <property type="evidence" value="ECO:0007669"/>
    <property type="project" value="UniProtKB-UniRule"/>
</dbReference>
<dbReference type="GO" id="GO:0015035">
    <property type="term" value="F:protein-disulfide reductase activity"/>
    <property type="evidence" value="ECO:0007669"/>
    <property type="project" value="UniProtKB-UniRule"/>
</dbReference>
<dbReference type="GO" id="GO:0006457">
    <property type="term" value="P:protein folding"/>
    <property type="evidence" value="ECO:0007669"/>
    <property type="project" value="InterPro"/>
</dbReference>
<dbReference type="Gene3D" id="1.20.1550.10">
    <property type="entry name" value="DsbB-like"/>
    <property type="match status" value="1"/>
</dbReference>
<dbReference type="HAMAP" id="MF_00286">
    <property type="entry name" value="DsbB"/>
    <property type="match status" value="1"/>
</dbReference>
<dbReference type="InterPro" id="IPR003752">
    <property type="entry name" value="DiS_bond_form_DsbB/BdbC"/>
</dbReference>
<dbReference type="InterPro" id="IPR022920">
    <property type="entry name" value="Disulphide_bond_form_DsbB"/>
</dbReference>
<dbReference type="InterPro" id="IPR050183">
    <property type="entry name" value="DsbB"/>
</dbReference>
<dbReference type="InterPro" id="IPR023380">
    <property type="entry name" value="DsbB-like_sf"/>
</dbReference>
<dbReference type="NCBIfam" id="NF002485">
    <property type="entry name" value="PRK01749.1"/>
    <property type="match status" value="1"/>
</dbReference>
<dbReference type="PANTHER" id="PTHR36570">
    <property type="entry name" value="DISULFIDE BOND FORMATION PROTEIN B"/>
    <property type="match status" value="1"/>
</dbReference>
<dbReference type="PANTHER" id="PTHR36570:SF2">
    <property type="entry name" value="DISULFIDE BOND FORMATION PROTEIN B"/>
    <property type="match status" value="1"/>
</dbReference>
<dbReference type="Pfam" id="PF02600">
    <property type="entry name" value="DsbB"/>
    <property type="match status" value="1"/>
</dbReference>
<dbReference type="SUPFAM" id="SSF158442">
    <property type="entry name" value="DsbB-like"/>
    <property type="match status" value="1"/>
</dbReference>
<comment type="function">
    <text evidence="1">Required for disulfide bond formation in some periplasmic proteins. Acts by oxidizing the DsbA protein.</text>
</comment>
<comment type="subcellular location">
    <subcellularLocation>
        <location evidence="1">Cell inner membrane</location>
        <topology evidence="1">Multi-pass membrane protein</topology>
    </subcellularLocation>
</comment>
<comment type="similarity">
    <text evidence="1">Belongs to the DsbB family.</text>
</comment>
<keyword id="KW-0997">Cell inner membrane</keyword>
<keyword id="KW-1003">Cell membrane</keyword>
<keyword id="KW-0143">Chaperone</keyword>
<keyword id="KW-1015">Disulfide bond</keyword>
<keyword id="KW-0249">Electron transport</keyword>
<keyword id="KW-0472">Membrane</keyword>
<keyword id="KW-0560">Oxidoreductase</keyword>
<keyword id="KW-0676">Redox-active center</keyword>
<keyword id="KW-1185">Reference proteome</keyword>
<keyword id="KW-0812">Transmembrane</keyword>
<keyword id="KW-1133">Transmembrane helix</keyword>
<keyword id="KW-0813">Transport</keyword>
<accession>Q492M6</accession>
<proteinExistence type="inferred from homology"/>
<organism>
    <name type="scientific">Blochmanniella pennsylvanica (strain BPEN)</name>
    <dbReference type="NCBI Taxonomy" id="291272"/>
    <lineage>
        <taxon>Bacteria</taxon>
        <taxon>Pseudomonadati</taxon>
        <taxon>Pseudomonadota</taxon>
        <taxon>Gammaproteobacteria</taxon>
        <taxon>Enterobacterales</taxon>
        <taxon>Enterobacteriaceae</taxon>
        <taxon>ant endosymbionts</taxon>
        <taxon>Candidatus Blochmanniella</taxon>
    </lineage>
</organism>
<name>DSBB_BLOPB</name>
<evidence type="ECO:0000255" key="1">
    <source>
        <dbReference type="HAMAP-Rule" id="MF_00286"/>
    </source>
</evidence>
<gene>
    <name evidence="1" type="primary">dsbB</name>
    <name type="ordered locus">BPEN_452</name>
</gene>
<feature type="chain" id="PRO_0000298341" description="Disulfide bond formation protein B">
    <location>
        <begin position="1"/>
        <end position="174"/>
    </location>
</feature>
<feature type="topological domain" description="Cytoplasmic" evidence="1">
    <location>
        <begin position="1"/>
        <end position="14"/>
    </location>
</feature>
<feature type="transmembrane region" description="Helical" evidence="1">
    <location>
        <begin position="15"/>
        <end position="31"/>
    </location>
</feature>
<feature type="topological domain" description="Periplasmic" evidence="1">
    <location>
        <begin position="32"/>
        <end position="49"/>
    </location>
</feature>
<feature type="transmembrane region" description="Helical" evidence="1">
    <location>
        <begin position="50"/>
        <end position="65"/>
    </location>
</feature>
<feature type="topological domain" description="Cytoplasmic" evidence="1">
    <location>
        <begin position="66"/>
        <end position="71"/>
    </location>
</feature>
<feature type="transmembrane region" description="Helical" evidence="1">
    <location>
        <begin position="72"/>
        <end position="89"/>
    </location>
</feature>
<feature type="topological domain" description="Periplasmic" evidence="1">
    <location>
        <begin position="90"/>
        <end position="144"/>
    </location>
</feature>
<feature type="transmembrane region" description="Helical" evidence="1">
    <location>
        <begin position="145"/>
        <end position="163"/>
    </location>
</feature>
<feature type="topological domain" description="Cytoplasmic" evidence="1">
    <location>
        <begin position="164"/>
        <end position="174"/>
    </location>
</feature>
<feature type="disulfide bond" description="Redox-active" evidence="1">
    <location>
        <begin position="41"/>
        <end position="44"/>
    </location>
</feature>
<feature type="disulfide bond" description="Redox-active" evidence="1">
    <location>
        <begin position="104"/>
        <end position="130"/>
    </location>
</feature>
<sequence>MLNFLNICSKTRKSWVLLIFTVVILELIALYLQHIVLIKPCVLCVYQRCALCGIGIAGLIGTIAPFTPLRFFSIPIWIYSAWKGLLLAKEYTDIQLHPSPFFMCDLFVQFPHWLPLNKWWPSMFDADGDCAEYKWYFLSLEISQWMLIIFANYLIIAILVSLSQIIDLKKWNNK</sequence>
<protein>
    <recommendedName>
        <fullName evidence="1">Disulfide bond formation protein B</fullName>
    </recommendedName>
    <alternativeName>
        <fullName evidence="1">Disulfide oxidoreductase</fullName>
    </alternativeName>
</protein>
<reference key="1">
    <citation type="journal article" date="2005" name="Genome Res.">
        <title>Genome sequence of Blochmannia pennsylvanicus indicates parallel evolutionary trends among bacterial mutualists of insects.</title>
        <authorList>
            <person name="Degnan P.H."/>
            <person name="Lazarus A.B."/>
            <person name="Wernegreen J.J."/>
        </authorList>
    </citation>
    <scope>NUCLEOTIDE SEQUENCE [LARGE SCALE GENOMIC DNA]</scope>
    <source>
        <strain>BPEN</strain>
    </source>
</reference>